<accession>P05318</accession>
<accession>D6VRR8</accession>
<sequence length="106" mass="10908">MSTESALSYAALILADSEIEISSEKLLTLTNAANVPVENIWADIFAKALDGQNLKDLLVNFSAGAAAPAGVAGGVAGGEAGEAEAEKEEEEAKEESDDDMGFGLFD</sequence>
<gene>
    <name evidence="9" type="primary">RPP1A</name>
    <name type="synonym">L12EIIA</name>
    <name type="synonym">RPA1</name>
    <name type="synonym">RPLA1</name>
    <name type="ordered locus">YDL081C</name>
</gene>
<proteinExistence type="evidence at protein level"/>
<name>RLA1_YEAST</name>
<dbReference type="EMBL" id="X06957">
    <property type="protein sequence ID" value="CAA30027.1"/>
    <property type="molecule type" value="mRNA"/>
</dbReference>
<dbReference type="EMBL" id="X13682">
    <property type="protein sequence ID" value="CAA31976.1"/>
    <property type="molecule type" value="Genomic_DNA"/>
</dbReference>
<dbReference type="EMBL" id="D90072">
    <property type="protein sequence ID" value="BAA14113.1"/>
    <property type="molecule type" value="Genomic_DNA"/>
</dbReference>
<dbReference type="EMBL" id="M26504">
    <property type="protein sequence ID" value="AAA34733.1"/>
    <property type="molecule type" value="Genomic_DNA"/>
</dbReference>
<dbReference type="EMBL" id="Z74129">
    <property type="protein sequence ID" value="CAA98647.1"/>
    <property type="molecule type" value="Genomic_DNA"/>
</dbReference>
<dbReference type="EMBL" id="AY558526">
    <property type="protein sequence ID" value="AAS56852.1"/>
    <property type="molecule type" value="Genomic_DNA"/>
</dbReference>
<dbReference type="EMBL" id="BK006938">
    <property type="protein sequence ID" value="DAA11778.1"/>
    <property type="molecule type" value="Genomic_DNA"/>
</dbReference>
<dbReference type="PIR" id="S67617">
    <property type="entry name" value="R5BY2A"/>
</dbReference>
<dbReference type="RefSeq" id="NP_010202.1">
    <property type="nucleotide sequence ID" value="NM_001180140.1"/>
</dbReference>
<dbReference type="PDB" id="4V6I">
    <property type="method" value="EM"/>
    <property type="resolution" value="8.80 A"/>
    <property type="chains" value="Bt/Bu=1-106"/>
</dbReference>
<dbReference type="PDB" id="4V8T">
    <property type="method" value="EM"/>
    <property type="resolution" value="8.10 A"/>
    <property type="chains" value="r=1-106"/>
</dbReference>
<dbReference type="PDB" id="5DGE">
    <property type="method" value="X-ray"/>
    <property type="resolution" value="3.45 A"/>
    <property type="chains" value="p1/p2=1-106"/>
</dbReference>
<dbReference type="PDB" id="5DGF">
    <property type="method" value="X-ray"/>
    <property type="resolution" value="3.30 A"/>
    <property type="chains" value="p1/p2=1-106"/>
</dbReference>
<dbReference type="PDBsum" id="4V6I"/>
<dbReference type="PDBsum" id="4V8T"/>
<dbReference type="PDBsum" id="5DGE"/>
<dbReference type="PDBsum" id="5DGF"/>
<dbReference type="SMR" id="P05318"/>
<dbReference type="BioGRID" id="31980">
    <property type="interactions" value="488"/>
</dbReference>
<dbReference type="ComplexPortal" id="CPX-1601">
    <property type="entry name" value="60S cytosolic large ribosomal subunit"/>
</dbReference>
<dbReference type="DIP" id="DIP-1583N"/>
<dbReference type="FunCoup" id="P05318">
    <property type="interactions" value="1054"/>
</dbReference>
<dbReference type="IntAct" id="P05318">
    <property type="interactions" value="88"/>
</dbReference>
<dbReference type="MINT" id="P05318"/>
<dbReference type="STRING" id="4932.YDL081C"/>
<dbReference type="iPTMnet" id="P05318"/>
<dbReference type="PaxDb" id="4932-YDL081C"/>
<dbReference type="PeptideAtlas" id="P05318"/>
<dbReference type="EnsemblFungi" id="YDL081C_mRNA">
    <property type="protein sequence ID" value="YDL081C"/>
    <property type="gene ID" value="YDL081C"/>
</dbReference>
<dbReference type="GeneID" id="851478"/>
<dbReference type="KEGG" id="sce:YDL081C"/>
<dbReference type="AGR" id="SGD:S000002239"/>
<dbReference type="SGD" id="S000002239">
    <property type="gene designation" value="RPP1A"/>
</dbReference>
<dbReference type="VEuPathDB" id="FungiDB:YDL081C"/>
<dbReference type="eggNOG" id="KOG1762">
    <property type="taxonomic scope" value="Eukaryota"/>
</dbReference>
<dbReference type="GeneTree" id="ENSGT00940000170577"/>
<dbReference type="HOGENOM" id="CLU_114656_1_0_1"/>
<dbReference type="InParanoid" id="P05318"/>
<dbReference type="OMA" id="YSAHDHE"/>
<dbReference type="OrthoDB" id="2194681at2759"/>
<dbReference type="BioCyc" id="YEAST:G3O-29490-MONOMER"/>
<dbReference type="Reactome" id="R-SCE-156827">
    <property type="pathway name" value="L13a-mediated translational silencing of Ceruloplasmin expression"/>
</dbReference>
<dbReference type="Reactome" id="R-SCE-1799339">
    <property type="pathway name" value="SRP-dependent cotranslational protein targeting to membrane"/>
</dbReference>
<dbReference type="Reactome" id="R-SCE-72689">
    <property type="pathway name" value="Formation of a pool of free 40S subunits"/>
</dbReference>
<dbReference type="Reactome" id="R-SCE-72706">
    <property type="pathway name" value="GTP hydrolysis and joining of the 60S ribosomal subunit"/>
</dbReference>
<dbReference type="Reactome" id="R-SCE-975956">
    <property type="pathway name" value="Nonsense Mediated Decay (NMD) independent of the Exon Junction Complex (EJC)"/>
</dbReference>
<dbReference type="Reactome" id="R-SCE-975957">
    <property type="pathway name" value="Nonsense Mediated Decay (NMD) enhanced by the Exon Junction Complex (EJC)"/>
</dbReference>
<dbReference type="BioGRID-ORCS" id="851478">
    <property type="hits" value="10 hits in 10 CRISPR screens"/>
</dbReference>
<dbReference type="PRO" id="PR:P05318"/>
<dbReference type="Proteomes" id="UP000002311">
    <property type="component" value="Chromosome IV"/>
</dbReference>
<dbReference type="RNAct" id="P05318">
    <property type="molecule type" value="protein"/>
</dbReference>
<dbReference type="GO" id="GO:0022625">
    <property type="term" value="C:cytosolic large ribosomal subunit"/>
    <property type="evidence" value="ECO:0000314"/>
    <property type="project" value="SGD"/>
</dbReference>
<dbReference type="GO" id="GO:0030295">
    <property type="term" value="F:protein kinase activator activity"/>
    <property type="evidence" value="ECO:0000314"/>
    <property type="project" value="SGD"/>
</dbReference>
<dbReference type="GO" id="GO:0043021">
    <property type="term" value="F:ribonucleoprotein complex binding"/>
    <property type="evidence" value="ECO:0000318"/>
    <property type="project" value="GO_Central"/>
</dbReference>
<dbReference type="GO" id="GO:0003735">
    <property type="term" value="F:structural constituent of ribosome"/>
    <property type="evidence" value="ECO:0000314"/>
    <property type="project" value="SGD"/>
</dbReference>
<dbReference type="GO" id="GO:0002181">
    <property type="term" value="P:cytoplasmic translation"/>
    <property type="evidence" value="ECO:0000315"/>
    <property type="project" value="SGD"/>
</dbReference>
<dbReference type="GO" id="GO:0006414">
    <property type="term" value="P:translational elongation"/>
    <property type="evidence" value="ECO:0007669"/>
    <property type="project" value="InterPro"/>
</dbReference>
<dbReference type="CDD" id="cd05831">
    <property type="entry name" value="Ribosomal_P1"/>
    <property type="match status" value="1"/>
</dbReference>
<dbReference type="DisProt" id="DP00164"/>
<dbReference type="FunFam" id="1.10.10.1410:FF:000002">
    <property type="entry name" value="60S acidic ribosomal protein P2"/>
    <property type="match status" value="1"/>
</dbReference>
<dbReference type="Gene3D" id="1.10.10.1410">
    <property type="match status" value="1"/>
</dbReference>
<dbReference type="HAMAP" id="MF_01478">
    <property type="entry name" value="Ribosomal_L12_arch"/>
    <property type="match status" value="1"/>
</dbReference>
<dbReference type="InterPro" id="IPR038716">
    <property type="entry name" value="P1/P2_N_sf"/>
</dbReference>
<dbReference type="InterPro" id="IPR027534">
    <property type="entry name" value="Ribosomal_P1/P2"/>
</dbReference>
<dbReference type="PANTHER" id="PTHR45696">
    <property type="entry name" value="60S ACIDIC RIBOSOMAL PROTEIN P1"/>
    <property type="match status" value="1"/>
</dbReference>
<dbReference type="PANTHER" id="PTHR45696:SF10">
    <property type="entry name" value="LARGE RIBOSOMAL SUBUNIT PROTEIN P1"/>
    <property type="match status" value="1"/>
</dbReference>
<dbReference type="Pfam" id="PF00428">
    <property type="entry name" value="Ribosomal_60s"/>
    <property type="match status" value="1"/>
</dbReference>
<organism>
    <name type="scientific">Saccharomyces cerevisiae (strain ATCC 204508 / S288c)</name>
    <name type="common">Baker's yeast</name>
    <dbReference type="NCBI Taxonomy" id="559292"/>
    <lineage>
        <taxon>Eukaryota</taxon>
        <taxon>Fungi</taxon>
        <taxon>Dikarya</taxon>
        <taxon>Ascomycota</taxon>
        <taxon>Saccharomycotina</taxon>
        <taxon>Saccharomycetes</taxon>
        <taxon>Saccharomycetales</taxon>
        <taxon>Saccharomycetaceae</taxon>
        <taxon>Saccharomyces</taxon>
    </lineage>
</organism>
<feature type="initiator methionine" description="Removed" evidence="2 7">
    <location>
        <position position="1"/>
    </location>
</feature>
<feature type="chain" id="PRO_0000157705" description="Large ribosomal subunit protein P1A">
    <location>
        <begin position="2"/>
        <end position="106"/>
    </location>
</feature>
<feature type="region of interest" description="Disordered" evidence="1">
    <location>
        <begin position="73"/>
        <end position="106"/>
    </location>
</feature>
<feature type="compositionally biased region" description="Acidic residues" evidence="1">
    <location>
        <begin position="81"/>
        <end position="100"/>
    </location>
</feature>
<feature type="modified residue" description="N-acetylserine" evidence="2 7">
    <location>
        <position position="2"/>
    </location>
</feature>
<feature type="modified residue" description="Phosphoserine" evidence="14 15">
    <location>
        <position position="96"/>
    </location>
</feature>
<feature type="sequence conflict" description="In Ref. 1; CAA30027 and 2; CAA31976/BAA14113." evidence="10" ref="1 2">
    <original>V</original>
    <variation>D</variation>
    <location>
        <position position="37"/>
    </location>
</feature>
<reference key="1">
    <citation type="journal article" date="1988" name="Nucleic Acids Res.">
        <title>cDNA and deduced amino acid sequence of acidic ribosomal protein A1 from Saccharomyces cerevisiae.</title>
        <authorList>
            <person name="Tsurugi K."/>
            <person name="Mitsui K."/>
        </authorList>
    </citation>
    <scope>NUCLEOTIDE SEQUENCE [MRNA]</scope>
    <source>
        <strain>IFO 40028</strain>
    </source>
</reference>
<reference key="2">
    <citation type="journal article" date="1989" name="Biochem. Biophys. Res. Commun.">
        <title>Identification of A1 protein as the fourth member of 13 kDa-type acidic ribosomal protein family in yeast Saccharomyces cerevisiae.</title>
        <authorList>
            <person name="Mitsui K."/>
            <person name="Tsurugi K."/>
        </authorList>
    </citation>
    <scope>NUCLEOTIDE SEQUENCE [GENOMIC DNA]</scope>
    <source>
        <strain>IFO 40028</strain>
    </source>
</reference>
<reference key="3">
    <citation type="journal article" date="1990" name="J. Bacteriol.">
        <title>A family of genes encode the multiple forms of the Saccharomyces cerevisiae ribosomal proteins equivalent to the Escherichia coli L12 protein and a single form of the L10-equivalent ribosomal protein.</title>
        <authorList>
            <person name="Newton C.H."/>
            <person name="Shimmin L.C."/>
            <person name="Yee J."/>
            <person name="Dennis P.P."/>
        </authorList>
    </citation>
    <scope>NUCLEOTIDE SEQUENCE [GENOMIC DNA]</scope>
    <source>
        <strain>SR26-12C</strain>
    </source>
</reference>
<reference key="4">
    <citation type="journal article" date="1997" name="Nature">
        <title>The nucleotide sequence of Saccharomyces cerevisiae chromosome IV.</title>
        <authorList>
            <person name="Jacq C."/>
            <person name="Alt-Moerbe J."/>
            <person name="Andre B."/>
            <person name="Arnold W."/>
            <person name="Bahr A."/>
            <person name="Ballesta J.P.G."/>
            <person name="Bargues M."/>
            <person name="Baron L."/>
            <person name="Becker A."/>
            <person name="Biteau N."/>
            <person name="Bloecker H."/>
            <person name="Blugeon C."/>
            <person name="Boskovic J."/>
            <person name="Brandt P."/>
            <person name="Brueckner M."/>
            <person name="Buitrago M.J."/>
            <person name="Coster F."/>
            <person name="Delaveau T."/>
            <person name="del Rey F."/>
            <person name="Dujon B."/>
            <person name="Eide L.G."/>
            <person name="Garcia-Cantalejo J.M."/>
            <person name="Goffeau A."/>
            <person name="Gomez-Peris A."/>
            <person name="Granotier C."/>
            <person name="Hanemann V."/>
            <person name="Hankeln T."/>
            <person name="Hoheisel J.D."/>
            <person name="Jaeger W."/>
            <person name="Jimenez A."/>
            <person name="Jonniaux J.-L."/>
            <person name="Kraemer C."/>
            <person name="Kuester H."/>
            <person name="Laamanen P."/>
            <person name="Legros Y."/>
            <person name="Louis E.J."/>
            <person name="Moeller-Rieker S."/>
            <person name="Monnet A."/>
            <person name="Moro M."/>
            <person name="Mueller-Auer S."/>
            <person name="Nussbaumer B."/>
            <person name="Paricio N."/>
            <person name="Paulin L."/>
            <person name="Perea J."/>
            <person name="Perez-Alonso M."/>
            <person name="Perez-Ortin J.E."/>
            <person name="Pohl T.M."/>
            <person name="Prydz H."/>
            <person name="Purnelle B."/>
            <person name="Rasmussen S.W."/>
            <person name="Remacha M.A."/>
            <person name="Revuelta J.L."/>
            <person name="Rieger M."/>
            <person name="Salom D."/>
            <person name="Saluz H.P."/>
            <person name="Saiz J.E."/>
            <person name="Saren A.-M."/>
            <person name="Schaefer M."/>
            <person name="Scharfe M."/>
            <person name="Schmidt E.R."/>
            <person name="Schneider C."/>
            <person name="Scholler P."/>
            <person name="Schwarz S."/>
            <person name="Soler-Mira A."/>
            <person name="Urrestarazu L.A."/>
            <person name="Verhasselt P."/>
            <person name="Vissers S."/>
            <person name="Voet M."/>
            <person name="Volckaert G."/>
            <person name="Wagner G."/>
            <person name="Wambutt R."/>
            <person name="Wedler E."/>
            <person name="Wedler H."/>
            <person name="Woelfl S."/>
            <person name="Harris D.E."/>
            <person name="Bowman S."/>
            <person name="Brown D."/>
            <person name="Churcher C.M."/>
            <person name="Connor R."/>
            <person name="Dedman K."/>
            <person name="Gentles S."/>
            <person name="Hamlin N."/>
            <person name="Hunt S."/>
            <person name="Jones L."/>
            <person name="McDonald S."/>
            <person name="Murphy L.D."/>
            <person name="Niblett D."/>
            <person name="Odell C."/>
            <person name="Oliver K."/>
            <person name="Rajandream M.A."/>
            <person name="Richards C."/>
            <person name="Shore L."/>
            <person name="Walsh S.V."/>
            <person name="Barrell B.G."/>
            <person name="Dietrich F.S."/>
            <person name="Mulligan J.T."/>
            <person name="Allen E."/>
            <person name="Araujo R."/>
            <person name="Aviles E."/>
            <person name="Berno A."/>
            <person name="Carpenter J."/>
            <person name="Chen E."/>
            <person name="Cherry J.M."/>
            <person name="Chung E."/>
            <person name="Duncan M."/>
            <person name="Hunicke-Smith S."/>
            <person name="Hyman R.W."/>
            <person name="Komp C."/>
            <person name="Lashkari D."/>
            <person name="Lew H."/>
            <person name="Lin D."/>
            <person name="Mosedale D."/>
            <person name="Nakahara K."/>
            <person name="Namath A."/>
            <person name="Oefner P."/>
            <person name="Oh C."/>
            <person name="Petel F.X."/>
            <person name="Roberts D."/>
            <person name="Schramm S."/>
            <person name="Schroeder M."/>
            <person name="Shogren T."/>
            <person name="Shroff N."/>
            <person name="Winant A."/>
            <person name="Yelton M.A."/>
            <person name="Botstein D."/>
            <person name="Davis R.W."/>
            <person name="Johnston M."/>
            <person name="Andrews S."/>
            <person name="Brinkman R."/>
            <person name="Cooper J."/>
            <person name="Ding H."/>
            <person name="Du Z."/>
            <person name="Favello A."/>
            <person name="Fulton L."/>
            <person name="Gattung S."/>
            <person name="Greco T."/>
            <person name="Hallsworth K."/>
            <person name="Hawkins J."/>
            <person name="Hillier L.W."/>
            <person name="Jier M."/>
            <person name="Johnson D."/>
            <person name="Johnston L."/>
            <person name="Kirsten J."/>
            <person name="Kucaba T."/>
            <person name="Langston Y."/>
            <person name="Latreille P."/>
            <person name="Le T."/>
            <person name="Mardis E."/>
            <person name="Menezes S."/>
            <person name="Miller N."/>
            <person name="Nhan M."/>
            <person name="Pauley A."/>
            <person name="Peluso D."/>
            <person name="Rifkin L."/>
            <person name="Riles L."/>
            <person name="Taich A."/>
            <person name="Trevaskis E."/>
            <person name="Vignati D."/>
            <person name="Wilcox L."/>
            <person name="Wohldman P."/>
            <person name="Vaudin M."/>
            <person name="Wilson R."/>
            <person name="Waterston R."/>
            <person name="Albermann K."/>
            <person name="Hani J."/>
            <person name="Heumann K."/>
            <person name="Kleine K."/>
            <person name="Mewes H.-W."/>
            <person name="Zollner A."/>
            <person name="Zaccaria P."/>
        </authorList>
    </citation>
    <scope>NUCLEOTIDE SEQUENCE [LARGE SCALE GENOMIC DNA]</scope>
    <source>
        <strain>ATCC 204508 / S288c</strain>
    </source>
</reference>
<reference key="5">
    <citation type="journal article" date="2014" name="G3 (Bethesda)">
        <title>The reference genome sequence of Saccharomyces cerevisiae: Then and now.</title>
        <authorList>
            <person name="Engel S.R."/>
            <person name="Dietrich F.S."/>
            <person name="Fisk D.G."/>
            <person name="Binkley G."/>
            <person name="Balakrishnan R."/>
            <person name="Costanzo M.C."/>
            <person name="Dwight S.S."/>
            <person name="Hitz B.C."/>
            <person name="Karra K."/>
            <person name="Nash R.S."/>
            <person name="Weng S."/>
            <person name="Wong E.D."/>
            <person name="Lloyd P."/>
            <person name="Skrzypek M.S."/>
            <person name="Miyasato S.R."/>
            <person name="Simison M."/>
            <person name="Cherry J.M."/>
        </authorList>
    </citation>
    <scope>GENOME REANNOTATION</scope>
    <source>
        <strain>ATCC 204508 / S288c</strain>
    </source>
</reference>
<reference key="6">
    <citation type="journal article" date="2007" name="Genome Res.">
        <title>Approaching a complete repository of sequence-verified protein-encoding clones for Saccharomyces cerevisiae.</title>
        <authorList>
            <person name="Hu Y."/>
            <person name="Rolfs A."/>
            <person name="Bhullar B."/>
            <person name="Murthy T.V.S."/>
            <person name="Zhu C."/>
            <person name="Berger M.F."/>
            <person name="Camargo A.A."/>
            <person name="Kelley F."/>
            <person name="McCarron S."/>
            <person name="Jepson D."/>
            <person name="Richardson A."/>
            <person name="Raphael J."/>
            <person name="Moreira D."/>
            <person name="Taycher E."/>
            <person name="Zuo D."/>
            <person name="Mohr S."/>
            <person name="Kane M.F."/>
            <person name="Williamson J."/>
            <person name="Simpson A.J.G."/>
            <person name="Bulyk M.L."/>
            <person name="Harlow E."/>
            <person name="Marsischky G."/>
            <person name="Kolodner R.D."/>
            <person name="LaBaer J."/>
        </authorList>
    </citation>
    <scope>NUCLEOTIDE SEQUENCE [GENOMIC DNA]</scope>
    <source>
        <strain>ATCC 204508 / S288c</strain>
    </source>
</reference>
<reference key="7">
    <citation type="journal article" date="1993" name="Biochemistry">
        <title>The acidic phosphoproteins from Saccharomyces cerevisiae ribosomes. NH2-terminal acetylation is a conserved difference between P1 and P2 proteins.</title>
        <authorList>
            <person name="Santos C."/>
            <person name="Ortiz-Reyes B."/>
            <person name="Naranda T."/>
            <person name="Remacha M."/>
            <person name="Ballesta J.P.G."/>
        </authorList>
    </citation>
    <scope>PROTEIN SEQUENCE OF 2-5</scope>
    <scope>ACETYLATION AT SER-2</scope>
    <scope>PHOSPHORYLATION</scope>
</reference>
<reference key="8">
    <citation type="journal article" date="1998" name="Yeast">
        <title>The list of cytoplasmic ribosomal proteins of Saccharomyces cerevisiae.</title>
        <authorList>
            <person name="Planta R.J."/>
            <person name="Mager W.H."/>
        </authorList>
    </citation>
    <scope>NOMENCLATURE</scope>
    <scope>SUBUNIT</scope>
</reference>
<reference key="9">
    <citation type="journal article" date="2006" name="Mol. Microbiol.">
        <title>Yeast ribosomal P0 protein has two separate binding sites for P1/P2 proteins.</title>
        <authorList>
            <person name="Krokowski D."/>
            <person name="Boguszewska A."/>
            <person name="Abramczyk D."/>
            <person name="Liljas A."/>
            <person name="Tchorzewski M."/>
            <person name="Grankowski N."/>
        </authorList>
    </citation>
    <scope>INTERACTION WITH RPP0 AND RPP2B</scope>
</reference>
<reference key="10">
    <citation type="journal article" date="1999" name="J. Biol. Chem.">
        <title>The action of N-terminal acetyltransferases on yeast ribosomal proteins.</title>
        <authorList>
            <person name="Arnold R.J."/>
            <person name="Polevoda B."/>
            <person name="Reilly J.P."/>
            <person name="Sherman F."/>
        </authorList>
    </citation>
    <scope>CLEAVAGE OF INITIATOR METHIONINE</scope>
    <scope>ACETYLATION AT SER-2 BY NATA</scope>
</reference>
<reference key="11">
    <citation type="journal article" date="2001" name="J. Biol. Chem.">
        <title>Asymmetric interactions between the acidic P1 and P2 proteins in the Saccharomyces cerevisiae ribosomal stalk.</title>
        <authorList>
            <person name="Guarinos E."/>
            <person name="Remacha M."/>
            <person name="Ballesta J.P.G."/>
        </authorList>
    </citation>
    <scope>INTERACTION WITH RPP2B</scope>
</reference>
<reference key="12">
    <citation type="journal article" date="2003" name="Nature">
        <title>Global analysis of protein localization in budding yeast.</title>
        <authorList>
            <person name="Huh W.-K."/>
            <person name="Falvo J.V."/>
            <person name="Gerke L.C."/>
            <person name="Carroll A.S."/>
            <person name="Howson R.W."/>
            <person name="Weissman J.S."/>
            <person name="O'Shea E.K."/>
        </authorList>
    </citation>
    <scope>SUBCELLULAR LOCATION [LARGE SCALE ANALYSIS]</scope>
</reference>
<reference key="13">
    <citation type="journal article" date="2008" name="Mol. Cell. Proteomics">
        <title>A multidimensional chromatography technology for in-depth phosphoproteome analysis.</title>
        <authorList>
            <person name="Albuquerque C.P."/>
            <person name="Smolka M.B."/>
            <person name="Payne S.H."/>
            <person name="Bafna V."/>
            <person name="Eng J."/>
            <person name="Zhou H."/>
        </authorList>
    </citation>
    <scope>PHOSPHORYLATION [LARGE SCALE ANALYSIS] AT SER-96</scope>
    <scope>IDENTIFICATION BY MASS SPECTROMETRY [LARGE SCALE ANALYSIS]</scope>
</reference>
<reference key="14">
    <citation type="journal article" date="2009" name="Science">
        <title>Global analysis of Cdk1 substrate phosphorylation sites provides insights into evolution.</title>
        <authorList>
            <person name="Holt L.J."/>
            <person name="Tuch B.B."/>
            <person name="Villen J."/>
            <person name="Johnson A.D."/>
            <person name="Gygi S.P."/>
            <person name="Morgan D.O."/>
        </authorList>
    </citation>
    <scope>PHOSPHORYLATION [LARGE SCALE ANALYSIS] AT SER-96</scope>
    <scope>IDENTIFICATION BY MASS SPECTROMETRY [LARGE SCALE ANALYSIS]</scope>
</reference>
<reference key="15">
    <citation type="journal article" date="2011" name="Science">
        <title>The structure of the eukaryotic ribosome at 3.0 A resolution.</title>
        <authorList>
            <person name="Ben-Shem A."/>
            <person name="Garreau de Loubresse N."/>
            <person name="Melnikov S."/>
            <person name="Jenner L."/>
            <person name="Yusupova G."/>
            <person name="Yusupov M."/>
        </authorList>
    </citation>
    <scope>SUBUNIT</scope>
    <scope>SUBCELLULAR LOCATION</scope>
</reference>
<reference key="16">
    <citation type="journal article" date="2014" name="Curr. Opin. Struct. Biol.">
        <title>A new system for naming ribosomal proteins.</title>
        <authorList>
            <person name="Ban N."/>
            <person name="Beckmann R."/>
            <person name="Cate J.H.D."/>
            <person name="Dinman J.D."/>
            <person name="Dragon F."/>
            <person name="Ellis S.R."/>
            <person name="Lafontaine D.L.J."/>
            <person name="Lindahl L."/>
            <person name="Liljas A."/>
            <person name="Lipton J.M."/>
            <person name="McAlear M.A."/>
            <person name="Moore P.B."/>
            <person name="Noller H.F."/>
            <person name="Ortega J."/>
            <person name="Panse V.G."/>
            <person name="Ramakrishnan V."/>
            <person name="Spahn C.M.T."/>
            <person name="Steitz T.A."/>
            <person name="Tchorzewski M."/>
            <person name="Tollervey D."/>
            <person name="Warren A.J."/>
            <person name="Williamson J.R."/>
            <person name="Wilson D."/>
            <person name="Yonath A."/>
            <person name="Yusupov M."/>
        </authorList>
    </citation>
    <scope>NOMENCLATURE</scope>
</reference>
<comment type="function">
    <text evidence="11">Component of the ribosome, a large ribonucleoprotein complex responsible for the synthesis of proteins in the cell. The small ribosomal subunit (SSU) binds messenger RNAs (mRNAs) and translates the encoded message by selecting cognate aminoacyl-transfer RNA (tRNA) molecules. The large subunit (LSU) contains the ribosomal catalytic site termed the peptidyl transferase center (PTC), which catalyzes the formation of peptide bonds, thereby polymerizing the amino acids delivered by tRNAs into a polypeptide chain. The nascent polypeptides leave the ribosome through a tunnel in the LSU and interact with protein factors that function in enzymatic processing, targeting, and the membrane insertion of nascent chains at the exit of the ribosomal tunnel.</text>
</comment>
<comment type="subunit">
    <text evidence="3 5 6 13">Component of the large ribosomal subunit (LSU). Mature yeast ribosomes consist of a small (40S) and a large (60S) subunit. The 40S small subunit contains 1 molecule of ribosomal RNA (18S rRNA) and 33 different proteins (encoded by 57 genes). The large 60S subunit contains 3 rRNA molecules (25S, 5.8S and 5S rRNA) and 46 different proteins (encoded by 81 genes) (PubMed:22096102, PubMed:9559554). The 5 acidic ribosomal P-proteins form the stalk structure of the 60S subunit. They are organized as a pentameric complex in which uL10/P0 interacts with 2 heterodimers, P1A-P2B and P1B-P2A (PubMed:11431471, PubMed:16573688).</text>
</comment>
<comment type="interaction">
    <interactant intactId="EBI-15452">
        <id>P05318</id>
    </interactant>
    <interactant intactId="EBI-15447">
        <id>P05317</id>
        <label>RPP0</label>
    </interactant>
    <organismsDiffer>false</organismsDiffer>
    <experiments>4</experiments>
</comment>
<comment type="interaction">
    <interactant intactId="EBI-15452">
        <id>P05318</id>
    </interactant>
    <interactant intactId="EBI-15464">
        <id>P02400</id>
        <label>RPP2B</label>
    </interactant>
    <organismsDiffer>false</organismsDiffer>
    <experiments>3</experiments>
</comment>
<comment type="subcellular location">
    <subcellularLocation>
        <location evidence="4 6">Cytoplasm</location>
    </subcellularLocation>
</comment>
<comment type="PTM">
    <text evidence="2 7">N-terminally acetylated by acetyltransferase NatA.</text>
</comment>
<comment type="miscellaneous">
    <text evidence="12">The 4 small acidic ribosomal P-proteins from yeast can be classified into two couples of similar but not identical sequences. Each couple (P1A/P1B and P2A/P2B) is distinctly related to one of the two acidic ribosomal P-proteins P1/P2 present in multicellular organisms.</text>
</comment>
<comment type="similarity">
    <text evidence="10">Belongs to the eukaryotic ribosomal protein P1/P2 family.</text>
</comment>
<evidence type="ECO:0000256" key="1">
    <source>
        <dbReference type="SAM" id="MobiDB-lite"/>
    </source>
</evidence>
<evidence type="ECO:0000269" key="2">
    <source>
    </source>
</evidence>
<evidence type="ECO:0000269" key="3">
    <source>
    </source>
</evidence>
<evidence type="ECO:0000269" key="4">
    <source>
    </source>
</evidence>
<evidence type="ECO:0000269" key="5">
    <source>
    </source>
</evidence>
<evidence type="ECO:0000269" key="6">
    <source>
    </source>
</evidence>
<evidence type="ECO:0000269" key="7">
    <source>
    </source>
</evidence>
<evidence type="ECO:0000303" key="8">
    <source>
    </source>
</evidence>
<evidence type="ECO:0000303" key="9">
    <source>
    </source>
</evidence>
<evidence type="ECO:0000305" key="10"/>
<evidence type="ECO:0000305" key="11">
    <source>
    </source>
</evidence>
<evidence type="ECO:0000305" key="12">
    <source>
    </source>
</evidence>
<evidence type="ECO:0000305" key="13">
    <source>
    </source>
</evidence>
<evidence type="ECO:0007744" key="14">
    <source>
    </source>
</evidence>
<evidence type="ECO:0007744" key="15">
    <source>
    </source>
</evidence>
<protein>
    <recommendedName>
        <fullName evidence="8">Large ribosomal subunit protein P1A</fullName>
        <shortName>P1A</shortName>
    </recommendedName>
    <alternativeName>
        <fullName evidence="9">60S acidic ribosomal protein P1-alpha</fullName>
        <shortName>A1</shortName>
    </alternativeName>
    <alternativeName>
        <fullName>L12eIIA</fullName>
    </alternativeName>
    <alternativeName>
        <fullName>YP1alpha</fullName>
    </alternativeName>
</protein>
<keyword id="KW-0002">3D-structure</keyword>
<keyword id="KW-0007">Acetylation</keyword>
<keyword id="KW-0963">Cytoplasm</keyword>
<keyword id="KW-0903">Direct protein sequencing</keyword>
<keyword id="KW-0597">Phosphoprotein</keyword>
<keyword id="KW-1185">Reference proteome</keyword>
<keyword id="KW-0687">Ribonucleoprotein</keyword>
<keyword id="KW-0689">Ribosomal protein</keyword>